<accession>O31719</accession>
<feature type="chain" id="PRO_0000360068" description="Uncharacterized protein YkzI">
    <location>
        <begin position="1"/>
        <end position="62"/>
    </location>
</feature>
<feature type="coiled-coil region" evidence="1">
    <location>
        <begin position="26"/>
        <end position="62"/>
    </location>
</feature>
<organism>
    <name type="scientific">Bacillus subtilis (strain 168)</name>
    <dbReference type="NCBI Taxonomy" id="224308"/>
    <lineage>
        <taxon>Bacteria</taxon>
        <taxon>Bacillati</taxon>
        <taxon>Bacillota</taxon>
        <taxon>Bacilli</taxon>
        <taxon>Bacillales</taxon>
        <taxon>Bacillaceae</taxon>
        <taxon>Bacillus</taxon>
    </lineage>
</organism>
<protein>
    <recommendedName>
        <fullName>Uncharacterized protein YkzI</fullName>
    </recommendedName>
</protein>
<sequence>MRQVVKEGFKEEKNNRVAVWRLEVDYELATLYEAMQKENEEQIEQSKNKLERLRKEWIRLNG</sequence>
<proteinExistence type="predicted"/>
<name>YKZI_BACSU</name>
<gene>
    <name type="primary">ykzI</name>
    <name type="ordered locus">BSU14660</name>
</gene>
<keyword id="KW-0175">Coiled coil</keyword>
<keyword id="KW-1185">Reference proteome</keyword>
<evidence type="ECO:0000255" key="1"/>
<dbReference type="EMBL" id="AL009126">
    <property type="protein sequence ID" value="CAB13339.1"/>
    <property type="molecule type" value="Genomic_DNA"/>
</dbReference>
<dbReference type="PIR" id="F69871">
    <property type="entry name" value="F69871"/>
</dbReference>
<dbReference type="RefSeq" id="NP_389349.1">
    <property type="nucleotide sequence ID" value="NC_000964.3"/>
</dbReference>
<dbReference type="RefSeq" id="WP_009967148.1">
    <property type="nucleotide sequence ID" value="NZ_OZ025638.1"/>
</dbReference>
<dbReference type="SMR" id="O31719"/>
<dbReference type="FunCoup" id="O31719">
    <property type="interactions" value="50"/>
</dbReference>
<dbReference type="STRING" id="224308.BSU14660"/>
<dbReference type="PaxDb" id="224308-BSU14660"/>
<dbReference type="EnsemblBacteria" id="CAB13339">
    <property type="protein sequence ID" value="CAB13339"/>
    <property type="gene ID" value="BSU_14660"/>
</dbReference>
<dbReference type="GeneID" id="935992"/>
<dbReference type="KEGG" id="bsu:BSU14660"/>
<dbReference type="PATRIC" id="fig|224308.179.peg.1599"/>
<dbReference type="eggNOG" id="ENOG5030D5Q">
    <property type="taxonomic scope" value="Bacteria"/>
</dbReference>
<dbReference type="InParanoid" id="O31719"/>
<dbReference type="OrthoDB" id="2828299at2"/>
<dbReference type="BioCyc" id="BSUB:BSU14660-MONOMER"/>
<dbReference type="PRO" id="PR:O31719"/>
<dbReference type="Proteomes" id="UP000001570">
    <property type="component" value="Chromosome"/>
</dbReference>
<reference key="1">
    <citation type="journal article" date="1997" name="Nature">
        <title>The complete genome sequence of the Gram-positive bacterium Bacillus subtilis.</title>
        <authorList>
            <person name="Kunst F."/>
            <person name="Ogasawara N."/>
            <person name="Moszer I."/>
            <person name="Albertini A.M."/>
            <person name="Alloni G."/>
            <person name="Azevedo V."/>
            <person name="Bertero M.G."/>
            <person name="Bessieres P."/>
            <person name="Bolotin A."/>
            <person name="Borchert S."/>
            <person name="Borriss R."/>
            <person name="Boursier L."/>
            <person name="Brans A."/>
            <person name="Braun M."/>
            <person name="Brignell S.C."/>
            <person name="Bron S."/>
            <person name="Brouillet S."/>
            <person name="Bruschi C.V."/>
            <person name="Caldwell B."/>
            <person name="Capuano V."/>
            <person name="Carter N.M."/>
            <person name="Choi S.-K."/>
            <person name="Codani J.-J."/>
            <person name="Connerton I.F."/>
            <person name="Cummings N.J."/>
            <person name="Daniel R.A."/>
            <person name="Denizot F."/>
            <person name="Devine K.M."/>
            <person name="Duesterhoeft A."/>
            <person name="Ehrlich S.D."/>
            <person name="Emmerson P.T."/>
            <person name="Entian K.-D."/>
            <person name="Errington J."/>
            <person name="Fabret C."/>
            <person name="Ferrari E."/>
            <person name="Foulger D."/>
            <person name="Fritz C."/>
            <person name="Fujita M."/>
            <person name="Fujita Y."/>
            <person name="Fuma S."/>
            <person name="Galizzi A."/>
            <person name="Galleron N."/>
            <person name="Ghim S.-Y."/>
            <person name="Glaser P."/>
            <person name="Goffeau A."/>
            <person name="Golightly E.J."/>
            <person name="Grandi G."/>
            <person name="Guiseppi G."/>
            <person name="Guy B.J."/>
            <person name="Haga K."/>
            <person name="Haiech J."/>
            <person name="Harwood C.R."/>
            <person name="Henaut A."/>
            <person name="Hilbert H."/>
            <person name="Holsappel S."/>
            <person name="Hosono S."/>
            <person name="Hullo M.-F."/>
            <person name="Itaya M."/>
            <person name="Jones L.-M."/>
            <person name="Joris B."/>
            <person name="Karamata D."/>
            <person name="Kasahara Y."/>
            <person name="Klaerr-Blanchard M."/>
            <person name="Klein C."/>
            <person name="Kobayashi Y."/>
            <person name="Koetter P."/>
            <person name="Koningstein G."/>
            <person name="Krogh S."/>
            <person name="Kumano M."/>
            <person name="Kurita K."/>
            <person name="Lapidus A."/>
            <person name="Lardinois S."/>
            <person name="Lauber J."/>
            <person name="Lazarevic V."/>
            <person name="Lee S.-M."/>
            <person name="Levine A."/>
            <person name="Liu H."/>
            <person name="Masuda S."/>
            <person name="Mauel C."/>
            <person name="Medigue C."/>
            <person name="Medina N."/>
            <person name="Mellado R.P."/>
            <person name="Mizuno M."/>
            <person name="Moestl D."/>
            <person name="Nakai S."/>
            <person name="Noback M."/>
            <person name="Noone D."/>
            <person name="O'Reilly M."/>
            <person name="Ogawa K."/>
            <person name="Ogiwara A."/>
            <person name="Oudega B."/>
            <person name="Park S.-H."/>
            <person name="Parro V."/>
            <person name="Pohl T.M."/>
            <person name="Portetelle D."/>
            <person name="Porwollik S."/>
            <person name="Prescott A.M."/>
            <person name="Presecan E."/>
            <person name="Pujic P."/>
            <person name="Purnelle B."/>
            <person name="Rapoport G."/>
            <person name="Rey M."/>
            <person name="Reynolds S."/>
            <person name="Rieger M."/>
            <person name="Rivolta C."/>
            <person name="Rocha E."/>
            <person name="Roche B."/>
            <person name="Rose M."/>
            <person name="Sadaie Y."/>
            <person name="Sato T."/>
            <person name="Scanlan E."/>
            <person name="Schleich S."/>
            <person name="Schroeter R."/>
            <person name="Scoffone F."/>
            <person name="Sekiguchi J."/>
            <person name="Sekowska A."/>
            <person name="Seror S.J."/>
            <person name="Serror P."/>
            <person name="Shin B.-S."/>
            <person name="Soldo B."/>
            <person name="Sorokin A."/>
            <person name="Tacconi E."/>
            <person name="Takagi T."/>
            <person name="Takahashi H."/>
            <person name="Takemaru K."/>
            <person name="Takeuchi M."/>
            <person name="Tamakoshi A."/>
            <person name="Tanaka T."/>
            <person name="Terpstra P."/>
            <person name="Tognoni A."/>
            <person name="Tosato V."/>
            <person name="Uchiyama S."/>
            <person name="Vandenbol M."/>
            <person name="Vannier F."/>
            <person name="Vassarotti A."/>
            <person name="Viari A."/>
            <person name="Wambutt R."/>
            <person name="Wedler E."/>
            <person name="Wedler H."/>
            <person name="Weitzenegger T."/>
            <person name="Winters P."/>
            <person name="Wipat A."/>
            <person name="Yamamoto H."/>
            <person name="Yamane K."/>
            <person name="Yasumoto K."/>
            <person name="Yata K."/>
            <person name="Yoshida K."/>
            <person name="Yoshikawa H.-F."/>
            <person name="Zumstein E."/>
            <person name="Yoshikawa H."/>
            <person name="Danchin A."/>
        </authorList>
    </citation>
    <scope>NUCLEOTIDE SEQUENCE [LARGE SCALE GENOMIC DNA]</scope>
    <source>
        <strain>168</strain>
    </source>
</reference>